<evidence type="ECO:0000255" key="1">
    <source>
        <dbReference type="HAMAP-Rule" id="MF_01334"/>
    </source>
</evidence>
<evidence type="ECO:0000305" key="2"/>
<accession>Q57BY2</accession>
<dbReference type="EMBL" id="AE017223">
    <property type="protein sequence ID" value="AAX74852.1"/>
    <property type="molecule type" value="Genomic_DNA"/>
</dbReference>
<dbReference type="RefSeq" id="WP_002964640.1">
    <property type="nucleotide sequence ID" value="NC_006932.1"/>
</dbReference>
<dbReference type="SMR" id="Q57BY2"/>
<dbReference type="EnsemblBacteria" id="AAX74852">
    <property type="protein sequence ID" value="AAX74852"/>
    <property type="gene ID" value="BruAb1_1524"/>
</dbReference>
<dbReference type="KEGG" id="bmb:BruAb1_1524"/>
<dbReference type="HOGENOM" id="CLU_075939_0_0_5"/>
<dbReference type="Proteomes" id="UP000000540">
    <property type="component" value="Chromosome I"/>
</dbReference>
<dbReference type="GO" id="GO:0022625">
    <property type="term" value="C:cytosolic large ribosomal subunit"/>
    <property type="evidence" value="ECO:0007669"/>
    <property type="project" value="TreeGrafter"/>
</dbReference>
<dbReference type="GO" id="GO:0008097">
    <property type="term" value="F:5S rRNA binding"/>
    <property type="evidence" value="ECO:0007669"/>
    <property type="project" value="InterPro"/>
</dbReference>
<dbReference type="GO" id="GO:0003735">
    <property type="term" value="F:structural constituent of ribosome"/>
    <property type="evidence" value="ECO:0007669"/>
    <property type="project" value="InterPro"/>
</dbReference>
<dbReference type="GO" id="GO:0006412">
    <property type="term" value="P:translation"/>
    <property type="evidence" value="ECO:0007669"/>
    <property type="project" value="UniProtKB-UniRule"/>
</dbReference>
<dbReference type="CDD" id="cd00495">
    <property type="entry name" value="Ribosomal_L25_TL5_CTC"/>
    <property type="match status" value="1"/>
</dbReference>
<dbReference type="Gene3D" id="2.170.120.20">
    <property type="entry name" value="Ribosomal protein L25, beta domain"/>
    <property type="match status" value="1"/>
</dbReference>
<dbReference type="Gene3D" id="2.40.240.10">
    <property type="entry name" value="Ribosomal Protein L25, Chain P"/>
    <property type="match status" value="1"/>
</dbReference>
<dbReference type="HAMAP" id="MF_01334">
    <property type="entry name" value="Ribosomal_bL25_CTC"/>
    <property type="match status" value="1"/>
</dbReference>
<dbReference type="InterPro" id="IPR020056">
    <property type="entry name" value="Rbsml_bL25/Gln-tRNA_synth_N"/>
</dbReference>
<dbReference type="InterPro" id="IPR011035">
    <property type="entry name" value="Ribosomal_bL25/Gln-tRNA_synth"/>
</dbReference>
<dbReference type="InterPro" id="IPR020057">
    <property type="entry name" value="Ribosomal_bL25_b-dom"/>
</dbReference>
<dbReference type="InterPro" id="IPR037121">
    <property type="entry name" value="Ribosomal_bL25_C"/>
</dbReference>
<dbReference type="InterPro" id="IPR001021">
    <property type="entry name" value="Ribosomal_bL25_long"/>
</dbReference>
<dbReference type="InterPro" id="IPR029751">
    <property type="entry name" value="Ribosomal_L25_dom"/>
</dbReference>
<dbReference type="InterPro" id="IPR020930">
    <property type="entry name" value="Ribosomal_uL5_bac-type"/>
</dbReference>
<dbReference type="NCBIfam" id="TIGR00731">
    <property type="entry name" value="bL25_bact_ctc"/>
    <property type="match status" value="1"/>
</dbReference>
<dbReference type="NCBIfam" id="NF004128">
    <property type="entry name" value="PRK05618.1-2"/>
    <property type="match status" value="1"/>
</dbReference>
<dbReference type="NCBIfam" id="NF004612">
    <property type="entry name" value="PRK05943.1"/>
    <property type="match status" value="1"/>
</dbReference>
<dbReference type="PANTHER" id="PTHR33284">
    <property type="entry name" value="RIBOSOMAL PROTEIN L25/GLN-TRNA SYNTHETASE, ANTI-CODON-BINDING DOMAIN-CONTAINING PROTEIN"/>
    <property type="match status" value="1"/>
</dbReference>
<dbReference type="PANTHER" id="PTHR33284:SF1">
    <property type="entry name" value="RIBOSOMAL PROTEIN L25_GLN-TRNA SYNTHETASE, ANTI-CODON-BINDING DOMAIN-CONTAINING PROTEIN"/>
    <property type="match status" value="1"/>
</dbReference>
<dbReference type="Pfam" id="PF01386">
    <property type="entry name" value="Ribosomal_L25p"/>
    <property type="match status" value="1"/>
</dbReference>
<dbReference type="Pfam" id="PF14693">
    <property type="entry name" value="Ribosomal_TL5_C"/>
    <property type="match status" value="1"/>
</dbReference>
<dbReference type="SUPFAM" id="SSF50715">
    <property type="entry name" value="Ribosomal protein L25-like"/>
    <property type="match status" value="1"/>
</dbReference>
<gene>
    <name evidence="1" type="primary">rplY</name>
    <name evidence="1" type="synonym">ctc</name>
    <name type="ordered locus">BruAb1_1524</name>
</gene>
<name>RL25_BRUAB</name>
<sequence>MSETYVLKADLRTRVGKGSSRELRRNGQIPAVIYGDKQEPLAIAVSYKEIFYKIHGGGFKTTVATIEVDGKKIQVLPKDYQLDPVRDFPQHVDFLRVSAKSVVHVNVPVHFKNEEAAPGIKRGGVLNVVRHDVELIVPANAIPEALEIDLSGLEIGDSVHISAVKLPKGATPAIQDRDFTIATIAAPAGLKSEENAEGAAEEAKDGE</sequence>
<reference key="1">
    <citation type="journal article" date="2005" name="J. Bacteriol.">
        <title>Completion of the genome sequence of Brucella abortus and comparison to the highly similar genomes of Brucella melitensis and Brucella suis.</title>
        <authorList>
            <person name="Halling S.M."/>
            <person name="Peterson-Burch B.D."/>
            <person name="Bricker B.J."/>
            <person name="Zuerner R.L."/>
            <person name="Qing Z."/>
            <person name="Li L.-L."/>
            <person name="Kapur V."/>
            <person name="Alt D.P."/>
            <person name="Olsen S.C."/>
        </authorList>
    </citation>
    <scope>NUCLEOTIDE SEQUENCE [LARGE SCALE GENOMIC DNA]</scope>
    <source>
        <strain>9-941</strain>
    </source>
</reference>
<feature type="chain" id="PRO_0000181524" description="Large ribosomal subunit protein bL25">
    <location>
        <begin position="1"/>
        <end position="207"/>
    </location>
</feature>
<keyword id="KW-0687">Ribonucleoprotein</keyword>
<keyword id="KW-0689">Ribosomal protein</keyword>
<keyword id="KW-0694">RNA-binding</keyword>
<keyword id="KW-0699">rRNA-binding</keyword>
<protein>
    <recommendedName>
        <fullName evidence="1">Large ribosomal subunit protein bL25</fullName>
    </recommendedName>
    <alternativeName>
        <fullName evidence="2">50S ribosomal protein L25</fullName>
    </alternativeName>
    <alternativeName>
        <fullName evidence="1">General stress protein CTC</fullName>
    </alternativeName>
</protein>
<organism>
    <name type="scientific">Brucella abortus biovar 1 (strain 9-941)</name>
    <dbReference type="NCBI Taxonomy" id="262698"/>
    <lineage>
        <taxon>Bacteria</taxon>
        <taxon>Pseudomonadati</taxon>
        <taxon>Pseudomonadota</taxon>
        <taxon>Alphaproteobacteria</taxon>
        <taxon>Hyphomicrobiales</taxon>
        <taxon>Brucellaceae</taxon>
        <taxon>Brucella/Ochrobactrum group</taxon>
        <taxon>Brucella</taxon>
    </lineage>
</organism>
<proteinExistence type="inferred from homology"/>
<comment type="function">
    <text evidence="1">This is one of the proteins that binds to the 5S RNA in the ribosome where it forms part of the central protuberance.</text>
</comment>
<comment type="subunit">
    <text evidence="1">Part of the 50S ribosomal subunit; part of the 5S rRNA/L5/L18/L25 subcomplex. Contacts the 5S rRNA. Binds to the 5S rRNA independently of L5 and L18.</text>
</comment>
<comment type="similarity">
    <text evidence="1">Belongs to the bacterial ribosomal protein bL25 family. CTC subfamily.</text>
</comment>